<keyword id="KW-1185">Reference proteome</keyword>
<keyword id="KW-0687">Ribonucleoprotein</keyword>
<keyword id="KW-0689">Ribosomal protein</keyword>
<keyword id="KW-0694">RNA-binding</keyword>
<keyword id="KW-0699">rRNA-binding</keyword>
<keyword id="KW-0820">tRNA-binding</keyword>
<proteinExistence type="inferred from homology"/>
<dbReference type="EMBL" id="CP000453">
    <property type="protein sequence ID" value="ABI55834.1"/>
    <property type="molecule type" value="Genomic_DNA"/>
</dbReference>
<dbReference type="RefSeq" id="WP_011628229.1">
    <property type="nucleotide sequence ID" value="NC_008340.1"/>
</dbReference>
<dbReference type="SMR" id="Q0ABF3"/>
<dbReference type="KEGG" id="aeh:Mlg_0480"/>
<dbReference type="eggNOG" id="COG0099">
    <property type="taxonomic scope" value="Bacteria"/>
</dbReference>
<dbReference type="HOGENOM" id="CLU_103849_1_2_6"/>
<dbReference type="OrthoDB" id="9803610at2"/>
<dbReference type="Proteomes" id="UP000001962">
    <property type="component" value="Chromosome"/>
</dbReference>
<dbReference type="GO" id="GO:0005829">
    <property type="term" value="C:cytosol"/>
    <property type="evidence" value="ECO:0007669"/>
    <property type="project" value="TreeGrafter"/>
</dbReference>
<dbReference type="GO" id="GO:0015935">
    <property type="term" value="C:small ribosomal subunit"/>
    <property type="evidence" value="ECO:0007669"/>
    <property type="project" value="TreeGrafter"/>
</dbReference>
<dbReference type="GO" id="GO:0019843">
    <property type="term" value="F:rRNA binding"/>
    <property type="evidence" value="ECO:0007669"/>
    <property type="project" value="UniProtKB-UniRule"/>
</dbReference>
<dbReference type="GO" id="GO:0003735">
    <property type="term" value="F:structural constituent of ribosome"/>
    <property type="evidence" value="ECO:0007669"/>
    <property type="project" value="InterPro"/>
</dbReference>
<dbReference type="GO" id="GO:0000049">
    <property type="term" value="F:tRNA binding"/>
    <property type="evidence" value="ECO:0007669"/>
    <property type="project" value="UniProtKB-UniRule"/>
</dbReference>
<dbReference type="GO" id="GO:0006412">
    <property type="term" value="P:translation"/>
    <property type="evidence" value="ECO:0007669"/>
    <property type="project" value="UniProtKB-UniRule"/>
</dbReference>
<dbReference type="FunFam" id="1.10.8.50:FF:000001">
    <property type="entry name" value="30S ribosomal protein S13"/>
    <property type="match status" value="1"/>
</dbReference>
<dbReference type="FunFam" id="4.10.910.10:FF:000001">
    <property type="entry name" value="30S ribosomal protein S13"/>
    <property type="match status" value="1"/>
</dbReference>
<dbReference type="Gene3D" id="1.10.8.50">
    <property type="match status" value="1"/>
</dbReference>
<dbReference type="Gene3D" id="4.10.910.10">
    <property type="entry name" value="30s ribosomal protein s13, domain 2"/>
    <property type="match status" value="1"/>
</dbReference>
<dbReference type="HAMAP" id="MF_01315">
    <property type="entry name" value="Ribosomal_uS13"/>
    <property type="match status" value="1"/>
</dbReference>
<dbReference type="InterPro" id="IPR027437">
    <property type="entry name" value="Rbsml_uS13_C"/>
</dbReference>
<dbReference type="InterPro" id="IPR001892">
    <property type="entry name" value="Ribosomal_uS13"/>
</dbReference>
<dbReference type="InterPro" id="IPR010979">
    <property type="entry name" value="Ribosomal_uS13-like_H2TH"/>
</dbReference>
<dbReference type="InterPro" id="IPR019980">
    <property type="entry name" value="Ribosomal_uS13_bac-type"/>
</dbReference>
<dbReference type="InterPro" id="IPR018269">
    <property type="entry name" value="Ribosomal_uS13_CS"/>
</dbReference>
<dbReference type="NCBIfam" id="TIGR03631">
    <property type="entry name" value="uS13_bact"/>
    <property type="match status" value="1"/>
</dbReference>
<dbReference type="PANTHER" id="PTHR10871">
    <property type="entry name" value="30S RIBOSOMAL PROTEIN S13/40S RIBOSOMAL PROTEIN S18"/>
    <property type="match status" value="1"/>
</dbReference>
<dbReference type="PANTHER" id="PTHR10871:SF1">
    <property type="entry name" value="SMALL RIBOSOMAL SUBUNIT PROTEIN US13M"/>
    <property type="match status" value="1"/>
</dbReference>
<dbReference type="Pfam" id="PF00416">
    <property type="entry name" value="Ribosomal_S13"/>
    <property type="match status" value="1"/>
</dbReference>
<dbReference type="PIRSF" id="PIRSF002134">
    <property type="entry name" value="Ribosomal_S13"/>
    <property type="match status" value="1"/>
</dbReference>
<dbReference type="SUPFAM" id="SSF46946">
    <property type="entry name" value="S13-like H2TH domain"/>
    <property type="match status" value="1"/>
</dbReference>
<dbReference type="PROSITE" id="PS00646">
    <property type="entry name" value="RIBOSOMAL_S13_1"/>
    <property type="match status" value="1"/>
</dbReference>
<dbReference type="PROSITE" id="PS50159">
    <property type="entry name" value="RIBOSOMAL_S13_2"/>
    <property type="match status" value="1"/>
</dbReference>
<name>RS13_ALKEH</name>
<organism>
    <name type="scientific">Alkalilimnicola ehrlichii (strain ATCC BAA-1101 / DSM 17681 / MLHE-1)</name>
    <dbReference type="NCBI Taxonomy" id="187272"/>
    <lineage>
        <taxon>Bacteria</taxon>
        <taxon>Pseudomonadati</taxon>
        <taxon>Pseudomonadota</taxon>
        <taxon>Gammaproteobacteria</taxon>
        <taxon>Chromatiales</taxon>
        <taxon>Ectothiorhodospiraceae</taxon>
        <taxon>Alkalilimnicola</taxon>
    </lineage>
</organism>
<reference key="1">
    <citation type="submission" date="2006-08" db="EMBL/GenBank/DDBJ databases">
        <title>Complete sequence of Alkalilimnicola ehrilichei MLHE-1.</title>
        <authorList>
            <person name="Copeland A."/>
            <person name="Lucas S."/>
            <person name="Lapidus A."/>
            <person name="Barry K."/>
            <person name="Detter J.C."/>
            <person name="Glavina del Rio T."/>
            <person name="Hammon N."/>
            <person name="Israni S."/>
            <person name="Dalin E."/>
            <person name="Tice H."/>
            <person name="Pitluck S."/>
            <person name="Sims D."/>
            <person name="Brettin T."/>
            <person name="Bruce D."/>
            <person name="Han C."/>
            <person name="Tapia R."/>
            <person name="Gilna P."/>
            <person name="Schmutz J."/>
            <person name="Larimer F."/>
            <person name="Land M."/>
            <person name="Hauser L."/>
            <person name="Kyrpides N."/>
            <person name="Mikhailova N."/>
            <person name="Oremland R.S."/>
            <person name="Hoeft S.E."/>
            <person name="Switzer-Blum J."/>
            <person name="Kulp T."/>
            <person name="King G."/>
            <person name="Tabita R."/>
            <person name="Witte B."/>
            <person name="Santini J.M."/>
            <person name="Basu P."/>
            <person name="Hollibaugh J.T."/>
            <person name="Xie G."/>
            <person name="Stolz J.F."/>
            <person name="Richardson P."/>
        </authorList>
    </citation>
    <scope>NUCLEOTIDE SEQUENCE [LARGE SCALE GENOMIC DNA]</scope>
    <source>
        <strain>ATCC BAA-1101 / DSM 17681 / MLHE-1</strain>
    </source>
</reference>
<sequence length="119" mass="13326">MARIAGVNIPVHKHAWVALTSIYGVGRTRAKAICDEAGVPRDRKVKELTEQELEAIRTALGKYEVEGDLRRAVAMDIKRLMDLGCYRGIRHRRGLPVRGQRTQTNARTRKGPRRGPAGK</sequence>
<feature type="chain" id="PRO_0000306557" description="Small ribosomal subunit protein uS13">
    <location>
        <begin position="1"/>
        <end position="119"/>
    </location>
</feature>
<feature type="region of interest" description="Disordered" evidence="2">
    <location>
        <begin position="94"/>
        <end position="119"/>
    </location>
</feature>
<gene>
    <name evidence="1" type="primary">rpsM</name>
    <name type="ordered locus">Mlg_0480</name>
</gene>
<evidence type="ECO:0000255" key="1">
    <source>
        <dbReference type="HAMAP-Rule" id="MF_01315"/>
    </source>
</evidence>
<evidence type="ECO:0000256" key="2">
    <source>
        <dbReference type="SAM" id="MobiDB-lite"/>
    </source>
</evidence>
<evidence type="ECO:0000305" key="3"/>
<accession>Q0ABF3</accession>
<protein>
    <recommendedName>
        <fullName evidence="1">Small ribosomal subunit protein uS13</fullName>
    </recommendedName>
    <alternativeName>
        <fullName evidence="3">30S ribosomal protein S13</fullName>
    </alternativeName>
</protein>
<comment type="function">
    <text evidence="1">Located at the top of the head of the 30S subunit, it contacts several helices of the 16S rRNA. In the 70S ribosome it contacts the 23S rRNA (bridge B1a) and protein L5 of the 50S subunit (bridge B1b), connecting the 2 subunits; these bridges are implicated in subunit movement. Contacts the tRNAs in the A and P-sites.</text>
</comment>
<comment type="subunit">
    <text evidence="1">Part of the 30S ribosomal subunit. Forms a loose heterodimer with protein S19. Forms two bridges to the 50S subunit in the 70S ribosome.</text>
</comment>
<comment type="similarity">
    <text evidence="1">Belongs to the universal ribosomal protein uS13 family.</text>
</comment>